<accession>P42731</accession>
<accession>Q8RXR5</accession>
<evidence type="ECO:0000255" key="1">
    <source>
        <dbReference type="PROSITE-ProRule" id="PRU00176"/>
    </source>
</evidence>
<evidence type="ECO:0000255" key="2">
    <source>
        <dbReference type="PROSITE-ProRule" id="PRU00641"/>
    </source>
</evidence>
<evidence type="ECO:0000256" key="3">
    <source>
        <dbReference type="SAM" id="MobiDB-lite"/>
    </source>
</evidence>
<evidence type="ECO:0000269" key="4">
    <source>
    </source>
</evidence>
<evidence type="ECO:0000269" key="5">
    <source>
    </source>
</evidence>
<evidence type="ECO:0000269" key="6">
    <source>
    </source>
</evidence>
<evidence type="ECO:0000269" key="7">
    <source>
    </source>
</evidence>
<evidence type="ECO:0000269" key="8">
    <source>
    </source>
</evidence>
<evidence type="ECO:0000269" key="9">
    <source>
    </source>
</evidence>
<evidence type="ECO:0000269" key="10">
    <source>
    </source>
</evidence>
<evidence type="ECO:0000269" key="11">
    <source>
    </source>
</evidence>
<evidence type="ECO:0000269" key="12">
    <source>
    </source>
</evidence>
<evidence type="ECO:0000269" key="13">
    <source>
    </source>
</evidence>
<evidence type="ECO:0000305" key="14"/>
<gene>
    <name type="primary">PAB2</name>
    <name type="ordered locus">At4g34110</name>
    <name type="ORF">F28A23.130</name>
</gene>
<feature type="chain" id="PRO_0000081714" description="Polyadenylate-binding protein 2">
    <location>
        <begin position="1"/>
        <end position="629"/>
    </location>
</feature>
<feature type="domain" description="RRM 1" evidence="1">
    <location>
        <begin position="36"/>
        <end position="114"/>
    </location>
</feature>
<feature type="domain" description="RRM 2" evidence="1">
    <location>
        <begin position="124"/>
        <end position="201"/>
    </location>
</feature>
<feature type="domain" description="RRM 3" evidence="1">
    <location>
        <begin position="215"/>
        <end position="292"/>
    </location>
</feature>
<feature type="domain" description="RRM 4" evidence="1">
    <location>
        <begin position="318"/>
        <end position="395"/>
    </location>
</feature>
<feature type="domain" description="PABC" evidence="2">
    <location>
        <begin position="539"/>
        <end position="616"/>
    </location>
</feature>
<feature type="region of interest" description="Disordered" evidence="3">
    <location>
        <begin position="1"/>
        <end position="25"/>
    </location>
</feature>
<feature type="region of interest" description="Disordered" evidence="3">
    <location>
        <begin position="480"/>
        <end position="507"/>
    </location>
</feature>
<feature type="compositionally biased region" description="Polar residues" evidence="3">
    <location>
        <begin position="1"/>
        <end position="12"/>
    </location>
</feature>
<feature type="compositionally biased region" description="Low complexity" evidence="3">
    <location>
        <begin position="13"/>
        <end position="25"/>
    </location>
</feature>
<feature type="compositionally biased region" description="Low complexity" evidence="3">
    <location>
        <begin position="492"/>
        <end position="507"/>
    </location>
</feature>
<sequence>MAQVQLQGQTPNGSTAAVTSAPATSGGATATQFGNTSLYVGDLDFNVTDSQLFDAFGQMGTVVTVRVCRDLVTRRSLGYGYVNFTNPQDAARAIQELNYIPLYGKPIRVMYSHRDPSVRRSGAGNIFIKNLDESIDHKALHDTFSSFGNIVSCKVAVDSSGQSKGYGFVQYANEESAQKAIEKLNGMLLNDKQVYVGPFLRRQERDSTANKTKFTNVYVKNLAESTTDDDLKNAFGEYGKITSAVVMKDGEGKSKGFGFVNFENADDAARAVESLNGHKFDDKEWYVGRAQKKSERETELRVRYEQNLKEAADKFQSSNLYVKNLDPSISDEKLKEIFSPFGTVTSSKVMRDPNGTSKGSGFVAFATPEEATEAMSQLSGKMIESKPLYVAIAQRKEDRRVRLQAQFSQVRPVAMQPSVGPRMPVYPPGGPGIGQQMFYGQAPPAMIPPQPGYGYQQQLVPGMRPGGGPVPSFFMPMVQPQQQRPGGGRRPGGIQHSQQQNPMMQQQMHPRGRMFRYPQGRGGSGDVPPYDMGNNMPLTIGALASNLSNATPEQQRTMLGEVLYPLVEQVEAESAAKVTGMLLEMDQTEVLHLLESPEALKAKVAEAMDVLRSVAAGGATEQLASLNLS</sequence>
<protein>
    <recommendedName>
        <fullName>Polyadenylate-binding protein 2</fullName>
        <shortName>PABP-2</shortName>
        <shortName>Poly(A)-binding protein 2</shortName>
    </recommendedName>
</protein>
<dbReference type="EMBL" id="L19418">
    <property type="protein sequence ID" value="AAA61780.1"/>
    <property type="molecule type" value="mRNA"/>
</dbReference>
<dbReference type="EMBL" id="AL021961">
    <property type="protein sequence ID" value="CAA17561.1"/>
    <property type="molecule type" value="Genomic_DNA"/>
</dbReference>
<dbReference type="EMBL" id="AL161584">
    <property type="protein sequence ID" value="CAB80128.1"/>
    <property type="molecule type" value="Genomic_DNA"/>
</dbReference>
<dbReference type="EMBL" id="CP002687">
    <property type="protein sequence ID" value="AEE86325.1"/>
    <property type="molecule type" value="Genomic_DNA"/>
</dbReference>
<dbReference type="EMBL" id="AY080718">
    <property type="protein sequence ID" value="AAL86321.1"/>
    <property type="molecule type" value="mRNA"/>
</dbReference>
<dbReference type="EMBL" id="BT002354">
    <property type="protein sequence ID" value="AAN86187.1"/>
    <property type="molecule type" value="mRNA"/>
</dbReference>
<dbReference type="PIR" id="T05425">
    <property type="entry name" value="T05425"/>
</dbReference>
<dbReference type="RefSeq" id="NP_195137.5">
    <property type="nucleotide sequence ID" value="NM_119572.7"/>
</dbReference>
<dbReference type="SMR" id="P42731"/>
<dbReference type="BioGRID" id="14839">
    <property type="interactions" value="13"/>
</dbReference>
<dbReference type="ELM" id="P42731"/>
<dbReference type="FunCoup" id="P42731">
    <property type="interactions" value="3786"/>
</dbReference>
<dbReference type="IntAct" id="P42731">
    <property type="interactions" value="8"/>
</dbReference>
<dbReference type="STRING" id="3702.P42731"/>
<dbReference type="iPTMnet" id="P42731"/>
<dbReference type="MetOSite" id="P42731"/>
<dbReference type="PaxDb" id="3702-AT4G34110.1"/>
<dbReference type="ProteomicsDB" id="248740"/>
<dbReference type="EnsemblPlants" id="AT4G34110.1">
    <property type="protein sequence ID" value="AT4G34110.1"/>
    <property type="gene ID" value="AT4G34110"/>
</dbReference>
<dbReference type="GeneID" id="829557"/>
<dbReference type="Gramene" id="AT4G34110.1">
    <property type="protein sequence ID" value="AT4G34110.1"/>
    <property type="gene ID" value="AT4G34110"/>
</dbReference>
<dbReference type="KEGG" id="ath:AT4G34110"/>
<dbReference type="Araport" id="AT4G34110"/>
<dbReference type="TAIR" id="AT4G34110">
    <property type="gene designation" value="PAB2"/>
</dbReference>
<dbReference type="eggNOG" id="KOG0123">
    <property type="taxonomic scope" value="Eukaryota"/>
</dbReference>
<dbReference type="HOGENOM" id="CLU_012062_22_4_1"/>
<dbReference type="InParanoid" id="P42731"/>
<dbReference type="OMA" id="QYANEES"/>
<dbReference type="OrthoDB" id="19742at2759"/>
<dbReference type="PhylomeDB" id="P42731"/>
<dbReference type="CD-CODE" id="24475C75">
    <property type="entry name" value="Stress granule"/>
</dbReference>
<dbReference type="CD-CODE" id="60F64496">
    <property type="entry name" value="P-body"/>
</dbReference>
<dbReference type="PRO" id="PR:P42731"/>
<dbReference type="Proteomes" id="UP000006548">
    <property type="component" value="Chromosome 4"/>
</dbReference>
<dbReference type="ExpressionAtlas" id="P42731">
    <property type="expression patterns" value="baseline and differential"/>
</dbReference>
<dbReference type="GO" id="GO:0005737">
    <property type="term" value="C:cytoplasm"/>
    <property type="evidence" value="ECO:0007669"/>
    <property type="project" value="UniProtKB-SubCell"/>
</dbReference>
<dbReference type="GO" id="GO:0005634">
    <property type="term" value="C:nucleus"/>
    <property type="evidence" value="ECO:0007669"/>
    <property type="project" value="UniProtKB-SubCell"/>
</dbReference>
<dbReference type="GO" id="GO:0005886">
    <property type="term" value="C:plasma membrane"/>
    <property type="evidence" value="ECO:0007005"/>
    <property type="project" value="TAIR"/>
</dbReference>
<dbReference type="GO" id="GO:1990904">
    <property type="term" value="C:ribonucleoprotein complex"/>
    <property type="evidence" value="ECO:0007669"/>
    <property type="project" value="InterPro"/>
</dbReference>
<dbReference type="GO" id="GO:0003729">
    <property type="term" value="F:mRNA binding"/>
    <property type="evidence" value="ECO:0000314"/>
    <property type="project" value="TAIR"/>
</dbReference>
<dbReference type="GO" id="GO:0003743">
    <property type="term" value="F:translation initiation factor activity"/>
    <property type="evidence" value="ECO:0000250"/>
    <property type="project" value="TAIR"/>
</dbReference>
<dbReference type="GO" id="GO:0000184">
    <property type="term" value="P:nuclear-transcribed mRNA catabolic process, nonsense-mediated decay"/>
    <property type="evidence" value="ECO:0007669"/>
    <property type="project" value="UniProtKB-KW"/>
</dbReference>
<dbReference type="GO" id="GO:1900151">
    <property type="term" value="P:regulation of nuclear-transcribed mRNA catabolic process, deadenylation-dependent decay"/>
    <property type="evidence" value="ECO:0000314"/>
    <property type="project" value="UniProtKB"/>
</dbReference>
<dbReference type="GO" id="GO:0060211">
    <property type="term" value="P:regulation of nuclear-transcribed mRNA poly(A) tail shortening"/>
    <property type="evidence" value="ECO:0000314"/>
    <property type="project" value="UniProtKB"/>
</dbReference>
<dbReference type="GO" id="GO:0006446">
    <property type="term" value="P:regulation of translational initiation"/>
    <property type="evidence" value="ECO:0000314"/>
    <property type="project" value="UniProtKB"/>
</dbReference>
<dbReference type="GO" id="GO:0006413">
    <property type="term" value="P:translational initiation"/>
    <property type="evidence" value="ECO:0000250"/>
    <property type="project" value="TAIR"/>
</dbReference>
<dbReference type="CDD" id="cd12378">
    <property type="entry name" value="RRM1_I_PABPs"/>
    <property type="match status" value="1"/>
</dbReference>
<dbReference type="CDD" id="cd12379">
    <property type="entry name" value="RRM2_I_PABPs"/>
    <property type="match status" value="1"/>
</dbReference>
<dbReference type="CDD" id="cd12380">
    <property type="entry name" value="RRM3_I_PABPs"/>
    <property type="match status" value="1"/>
</dbReference>
<dbReference type="CDD" id="cd12381">
    <property type="entry name" value="RRM4_I_PABPs"/>
    <property type="match status" value="1"/>
</dbReference>
<dbReference type="FunFam" id="1.10.1900.10:FF:000003">
    <property type="entry name" value="Polyadenylate-binding protein"/>
    <property type="match status" value="1"/>
</dbReference>
<dbReference type="FunFam" id="3.30.70.330:FF:000239">
    <property type="entry name" value="Polyadenylate-binding protein"/>
    <property type="match status" value="1"/>
</dbReference>
<dbReference type="FunFam" id="3.30.70.330:FF:000285">
    <property type="entry name" value="Polyadenylate-binding protein"/>
    <property type="match status" value="1"/>
</dbReference>
<dbReference type="FunFam" id="3.30.70.330:FF:000648">
    <property type="entry name" value="Polyadenylate-binding protein"/>
    <property type="match status" value="1"/>
</dbReference>
<dbReference type="FunFam" id="3.30.70.330:FF:001280">
    <property type="entry name" value="Polyadenylate-binding protein"/>
    <property type="match status" value="1"/>
</dbReference>
<dbReference type="Gene3D" id="3.30.70.330">
    <property type="match status" value="4"/>
</dbReference>
<dbReference type="Gene3D" id="1.10.1900.10">
    <property type="entry name" value="c-terminal domain of poly(a) binding protein"/>
    <property type="match status" value="1"/>
</dbReference>
<dbReference type="InterPro" id="IPR002343">
    <property type="entry name" value="Hud_Sxl_RNA"/>
</dbReference>
<dbReference type="InterPro" id="IPR012677">
    <property type="entry name" value="Nucleotide-bd_a/b_plait_sf"/>
</dbReference>
<dbReference type="InterPro" id="IPR036053">
    <property type="entry name" value="PABP-dom"/>
</dbReference>
<dbReference type="InterPro" id="IPR006515">
    <property type="entry name" value="PABP_1234"/>
</dbReference>
<dbReference type="InterPro" id="IPR002004">
    <property type="entry name" value="PABP_HYD_C"/>
</dbReference>
<dbReference type="InterPro" id="IPR034364">
    <property type="entry name" value="PABP_RRM1"/>
</dbReference>
<dbReference type="InterPro" id="IPR035979">
    <property type="entry name" value="RBD_domain_sf"/>
</dbReference>
<dbReference type="InterPro" id="IPR045305">
    <property type="entry name" value="RRM2_I_PABPs"/>
</dbReference>
<dbReference type="InterPro" id="IPR000504">
    <property type="entry name" value="RRM_dom"/>
</dbReference>
<dbReference type="InterPro" id="IPR003954">
    <property type="entry name" value="RRM_dom_euk"/>
</dbReference>
<dbReference type="NCBIfam" id="TIGR01628">
    <property type="entry name" value="PABP-1234"/>
    <property type="match status" value="1"/>
</dbReference>
<dbReference type="PANTHER" id="PTHR24012">
    <property type="entry name" value="RNA BINDING PROTEIN"/>
    <property type="match status" value="1"/>
</dbReference>
<dbReference type="Pfam" id="PF00658">
    <property type="entry name" value="MLLE"/>
    <property type="match status" value="1"/>
</dbReference>
<dbReference type="Pfam" id="PF00076">
    <property type="entry name" value="RRM_1"/>
    <property type="match status" value="4"/>
</dbReference>
<dbReference type="PRINTS" id="PR00961">
    <property type="entry name" value="HUDSXLRNA"/>
</dbReference>
<dbReference type="SMART" id="SM00517">
    <property type="entry name" value="PolyA"/>
    <property type="match status" value="1"/>
</dbReference>
<dbReference type="SMART" id="SM00360">
    <property type="entry name" value="RRM"/>
    <property type="match status" value="4"/>
</dbReference>
<dbReference type="SMART" id="SM00361">
    <property type="entry name" value="RRM_1"/>
    <property type="match status" value="4"/>
</dbReference>
<dbReference type="SUPFAM" id="SSF63570">
    <property type="entry name" value="PABC (PABP) domain"/>
    <property type="match status" value="1"/>
</dbReference>
<dbReference type="SUPFAM" id="SSF54928">
    <property type="entry name" value="RNA-binding domain, RBD"/>
    <property type="match status" value="3"/>
</dbReference>
<dbReference type="PROSITE" id="PS51309">
    <property type="entry name" value="PABC"/>
    <property type="match status" value="1"/>
</dbReference>
<dbReference type="PROSITE" id="PS50102">
    <property type="entry name" value="RRM"/>
    <property type="match status" value="4"/>
</dbReference>
<reference key="1">
    <citation type="journal article" date="1993" name="Plant Physiol.">
        <title>Molecular characterization of PAB2, a member of the multigene family coding for poly(A)-binding proteins in Arabidopsis thaliana.</title>
        <authorList>
            <person name="Hilson P."/>
            <person name="Carroll K.L."/>
            <person name="Masson P.H."/>
        </authorList>
    </citation>
    <scope>NUCLEOTIDE SEQUENCE [MRNA]</scope>
    <scope>TISSUE SPECIFICITY</scope>
    <source>
        <strain>cv. Columbia</strain>
        <tissue>Shoot</tissue>
    </source>
</reference>
<reference key="2">
    <citation type="journal article" date="1999" name="Nature">
        <title>Sequence and analysis of chromosome 4 of the plant Arabidopsis thaliana.</title>
        <authorList>
            <person name="Mayer K.F.X."/>
            <person name="Schueller C."/>
            <person name="Wambutt R."/>
            <person name="Murphy G."/>
            <person name="Volckaert G."/>
            <person name="Pohl T."/>
            <person name="Duesterhoeft A."/>
            <person name="Stiekema W."/>
            <person name="Entian K.-D."/>
            <person name="Terryn N."/>
            <person name="Harris B."/>
            <person name="Ansorge W."/>
            <person name="Brandt P."/>
            <person name="Grivell L.A."/>
            <person name="Rieger M."/>
            <person name="Weichselgartner M."/>
            <person name="de Simone V."/>
            <person name="Obermaier B."/>
            <person name="Mache R."/>
            <person name="Mueller M."/>
            <person name="Kreis M."/>
            <person name="Delseny M."/>
            <person name="Puigdomenech P."/>
            <person name="Watson M."/>
            <person name="Schmidtheini T."/>
            <person name="Reichert B."/>
            <person name="Portetelle D."/>
            <person name="Perez-Alonso M."/>
            <person name="Boutry M."/>
            <person name="Bancroft I."/>
            <person name="Vos P."/>
            <person name="Hoheisel J."/>
            <person name="Zimmermann W."/>
            <person name="Wedler H."/>
            <person name="Ridley P."/>
            <person name="Langham S.-A."/>
            <person name="McCullagh B."/>
            <person name="Bilham L."/>
            <person name="Robben J."/>
            <person name="van der Schueren J."/>
            <person name="Grymonprez B."/>
            <person name="Chuang Y.-J."/>
            <person name="Vandenbussche F."/>
            <person name="Braeken M."/>
            <person name="Weltjens I."/>
            <person name="Voet M."/>
            <person name="Bastiaens I."/>
            <person name="Aert R."/>
            <person name="Defoor E."/>
            <person name="Weitzenegger T."/>
            <person name="Bothe G."/>
            <person name="Ramsperger U."/>
            <person name="Hilbert H."/>
            <person name="Braun M."/>
            <person name="Holzer E."/>
            <person name="Brandt A."/>
            <person name="Peters S."/>
            <person name="van Staveren M."/>
            <person name="Dirkse W."/>
            <person name="Mooijman P."/>
            <person name="Klein Lankhorst R."/>
            <person name="Rose M."/>
            <person name="Hauf J."/>
            <person name="Koetter P."/>
            <person name="Berneiser S."/>
            <person name="Hempel S."/>
            <person name="Feldpausch M."/>
            <person name="Lamberth S."/>
            <person name="Van den Daele H."/>
            <person name="De Keyser A."/>
            <person name="Buysshaert C."/>
            <person name="Gielen J."/>
            <person name="Villarroel R."/>
            <person name="De Clercq R."/>
            <person name="van Montagu M."/>
            <person name="Rogers J."/>
            <person name="Cronin A."/>
            <person name="Quail M.A."/>
            <person name="Bray-Allen S."/>
            <person name="Clark L."/>
            <person name="Doggett J."/>
            <person name="Hall S."/>
            <person name="Kay M."/>
            <person name="Lennard N."/>
            <person name="McLay K."/>
            <person name="Mayes R."/>
            <person name="Pettett A."/>
            <person name="Rajandream M.A."/>
            <person name="Lyne M."/>
            <person name="Benes V."/>
            <person name="Rechmann S."/>
            <person name="Borkova D."/>
            <person name="Bloecker H."/>
            <person name="Scharfe M."/>
            <person name="Grimm M."/>
            <person name="Loehnert T.-H."/>
            <person name="Dose S."/>
            <person name="de Haan M."/>
            <person name="Maarse A.C."/>
            <person name="Schaefer M."/>
            <person name="Mueller-Auer S."/>
            <person name="Gabel C."/>
            <person name="Fuchs M."/>
            <person name="Fartmann B."/>
            <person name="Granderath K."/>
            <person name="Dauner D."/>
            <person name="Herzl A."/>
            <person name="Neumann S."/>
            <person name="Argiriou A."/>
            <person name="Vitale D."/>
            <person name="Liguori R."/>
            <person name="Piravandi E."/>
            <person name="Massenet O."/>
            <person name="Quigley F."/>
            <person name="Clabauld G."/>
            <person name="Muendlein A."/>
            <person name="Felber R."/>
            <person name="Schnabl S."/>
            <person name="Hiller R."/>
            <person name="Schmidt W."/>
            <person name="Lecharny A."/>
            <person name="Aubourg S."/>
            <person name="Chefdor F."/>
            <person name="Cooke R."/>
            <person name="Berger C."/>
            <person name="Monfort A."/>
            <person name="Casacuberta E."/>
            <person name="Gibbons T."/>
            <person name="Weber N."/>
            <person name="Vandenbol M."/>
            <person name="Bargues M."/>
            <person name="Terol J."/>
            <person name="Torres A."/>
            <person name="Perez-Perez A."/>
            <person name="Purnelle B."/>
            <person name="Bent E."/>
            <person name="Johnson S."/>
            <person name="Tacon D."/>
            <person name="Jesse T."/>
            <person name="Heijnen L."/>
            <person name="Schwarz S."/>
            <person name="Scholler P."/>
            <person name="Heber S."/>
            <person name="Francs P."/>
            <person name="Bielke C."/>
            <person name="Frishman D."/>
            <person name="Haase D."/>
            <person name="Lemcke K."/>
            <person name="Mewes H.-W."/>
            <person name="Stocker S."/>
            <person name="Zaccaria P."/>
            <person name="Bevan M."/>
            <person name="Wilson R.K."/>
            <person name="de la Bastide M."/>
            <person name="Habermann K."/>
            <person name="Parnell L."/>
            <person name="Dedhia N."/>
            <person name="Gnoj L."/>
            <person name="Schutz K."/>
            <person name="Huang E."/>
            <person name="Spiegel L."/>
            <person name="Sekhon M."/>
            <person name="Murray J."/>
            <person name="Sheet P."/>
            <person name="Cordes M."/>
            <person name="Abu-Threideh J."/>
            <person name="Stoneking T."/>
            <person name="Kalicki J."/>
            <person name="Graves T."/>
            <person name="Harmon G."/>
            <person name="Edwards J."/>
            <person name="Latreille P."/>
            <person name="Courtney L."/>
            <person name="Cloud J."/>
            <person name="Abbott A."/>
            <person name="Scott K."/>
            <person name="Johnson D."/>
            <person name="Minx P."/>
            <person name="Bentley D."/>
            <person name="Fulton B."/>
            <person name="Miller N."/>
            <person name="Greco T."/>
            <person name="Kemp K."/>
            <person name="Kramer J."/>
            <person name="Fulton L."/>
            <person name="Mardis E."/>
            <person name="Dante M."/>
            <person name="Pepin K."/>
            <person name="Hillier L.W."/>
            <person name="Nelson J."/>
            <person name="Spieth J."/>
            <person name="Ryan E."/>
            <person name="Andrews S."/>
            <person name="Geisel C."/>
            <person name="Layman D."/>
            <person name="Du H."/>
            <person name="Ali J."/>
            <person name="Berghoff A."/>
            <person name="Jones K."/>
            <person name="Drone K."/>
            <person name="Cotton M."/>
            <person name="Joshu C."/>
            <person name="Antonoiu B."/>
            <person name="Zidanic M."/>
            <person name="Strong C."/>
            <person name="Sun H."/>
            <person name="Lamar B."/>
            <person name="Yordan C."/>
            <person name="Ma P."/>
            <person name="Zhong J."/>
            <person name="Preston R."/>
            <person name="Vil D."/>
            <person name="Shekher M."/>
            <person name="Matero A."/>
            <person name="Shah R."/>
            <person name="Swaby I.K."/>
            <person name="O'Shaughnessy A."/>
            <person name="Rodriguez M."/>
            <person name="Hoffman J."/>
            <person name="Till S."/>
            <person name="Granat S."/>
            <person name="Shohdy N."/>
            <person name="Hasegawa A."/>
            <person name="Hameed A."/>
            <person name="Lodhi M."/>
            <person name="Johnson A."/>
            <person name="Chen E."/>
            <person name="Marra M.A."/>
            <person name="Martienssen R."/>
            <person name="McCombie W.R."/>
        </authorList>
    </citation>
    <scope>NUCLEOTIDE SEQUENCE [LARGE SCALE GENOMIC DNA]</scope>
    <source>
        <strain>cv. Columbia</strain>
    </source>
</reference>
<reference key="3">
    <citation type="journal article" date="2017" name="Plant J.">
        <title>Araport11: a complete reannotation of the Arabidopsis thaliana reference genome.</title>
        <authorList>
            <person name="Cheng C.Y."/>
            <person name="Krishnakumar V."/>
            <person name="Chan A.P."/>
            <person name="Thibaud-Nissen F."/>
            <person name="Schobel S."/>
            <person name="Town C.D."/>
        </authorList>
    </citation>
    <scope>GENOME REANNOTATION</scope>
    <source>
        <strain>cv. Columbia</strain>
    </source>
</reference>
<reference key="4">
    <citation type="journal article" date="2003" name="Science">
        <title>Empirical analysis of transcriptional activity in the Arabidopsis genome.</title>
        <authorList>
            <person name="Yamada K."/>
            <person name="Lim J."/>
            <person name="Dale J.M."/>
            <person name="Chen H."/>
            <person name="Shinn P."/>
            <person name="Palm C.J."/>
            <person name="Southwick A.M."/>
            <person name="Wu H.C."/>
            <person name="Kim C.J."/>
            <person name="Nguyen M."/>
            <person name="Pham P.K."/>
            <person name="Cheuk R.F."/>
            <person name="Karlin-Newmann G."/>
            <person name="Liu S.X."/>
            <person name="Lam B."/>
            <person name="Sakano H."/>
            <person name="Wu T."/>
            <person name="Yu G."/>
            <person name="Miranda M."/>
            <person name="Quach H.L."/>
            <person name="Tripp M."/>
            <person name="Chang C.H."/>
            <person name="Lee J.M."/>
            <person name="Toriumi M.J."/>
            <person name="Chan M.M."/>
            <person name="Tang C.C."/>
            <person name="Onodera C.S."/>
            <person name="Deng J.M."/>
            <person name="Akiyama K."/>
            <person name="Ansari Y."/>
            <person name="Arakawa T."/>
            <person name="Banh J."/>
            <person name="Banno F."/>
            <person name="Bowser L."/>
            <person name="Brooks S.Y."/>
            <person name="Carninci P."/>
            <person name="Chao Q."/>
            <person name="Choy N."/>
            <person name="Enju A."/>
            <person name="Goldsmith A.D."/>
            <person name="Gurjal M."/>
            <person name="Hansen N.F."/>
            <person name="Hayashizaki Y."/>
            <person name="Johnson-Hopson C."/>
            <person name="Hsuan V.W."/>
            <person name="Iida K."/>
            <person name="Karnes M."/>
            <person name="Khan S."/>
            <person name="Koesema E."/>
            <person name="Ishida J."/>
            <person name="Jiang P.X."/>
            <person name="Jones T."/>
            <person name="Kawai J."/>
            <person name="Kamiya A."/>
            <person name="Meyers C."/>
            <person name="Nakajima M."/>
            <person name="Narusaka M."/>
            <person name="Seki M."/>
            <person name="Sakurai T."/>
            <person name="Satou M."/>
            <person name="Tamse R."/>
            <person name="Vaysberg M."/>
            <person name="Wallender E.K."/>
            <person name="Wong C."/>
            <person name="Yamamura Y."/>
            <person name="Yuan S."/>
            <person name="Shinozaki K."/>
            <person name="Davis R.W."/>
            <person name="Theologis A."/>
            <person name="Ecker J.R."/>
        </authorList>
    </citation>
    <scope>NUCLEOTIDE SEQUENCE [LARGE SCALE MRNA]</scope>
    <source>
        <strain>cv. Columbia</strain>
    </source>
</reference>
<reference key="5">
    <citation type="journal article" date="2000" name="Plant J.">
        <title>Arabidopsis thaliana poly (A) binding protein 2 (PAB2) functions in yeast translational and mRNA decay processes.</title>
        <authorList>
            <person name="Palanivelu R."/>
            <person name="Belostotsky D.A."/>
            <person name="Meagher R.B."/>
        </authorList>
    </citation>
    <scope>FUNCTION</scope>
    <scope>INTERACTION WITH EIF-ISO4G</scope>
</reference>
<reference key="6">
    <citation type="journal article" date="2000" name="Plant J.">
        <title>Conserved expression of Arabidopsis thaliana poly (A) binding protein 2 (PAB2) in distinct vegetative and reproductive tissues.</title>
        <authorList>
            <person name="Palanivelu R."/>
            <person name="Belostotsky D.A."/>
            <person name="Meagher R.B."/>
        </authorList>
    </citation>
    <scope>TISSUE SPECIFICITY</scope>
</reference>
<reference key="7">
    <citation type="journal article" date="2003" name="Genetics">
        <title>Unexpected complexity of poly(A)-binding protein gene families in flowering plants: three conserved lineages that are at least 200 million years old and possible auto- and cross-regulation.</title>
        <authorList>
            <person name="Belostotsky D.A."/>
        </authorList>
    </citation>
    <scope>GENE FAMILY</scope>
</reference>
<reference key="8">
    <citation type="journal article" date="2004" name="J. Gen. Virol.">
        <title>Interaction of VPg-Pro of turnip mosaic virus with the translation initiation factor 4E and the poly(A)-binding protein in planta.</title>
        <authorList>
            <person name="Leonard S."/>
            <person name="Viel C."/>
            <person name="Beauchemin C."/>
            <person name="Daigneault N."/>
            <person name="Fortin M.G."/>
            <person name="Laliberte J.F."/>
        </authorList>
    </citation>
    <scope>INTERACTION WITH VIRAL VPG-PRO</scope>
</reference>
<reference key="9">
    <citation type="journal article" date="2005" name="Mol. Genet. Genomics">
        <title>Four distinct classes of proteins as interaction partners of the PABC domain of Arabidopsis thaliana Poly(A)-binding proteins.</title>
        <authorList>
            <person name="Bravo J."/>
            <person name="Aguilar-Henonin L."/>
            <person name="Olmedo G."/>
            <person name="Guzman P."/>
        </authorList>
    </citation>
    <scope>INTERACTION WITH CID1/ERD15 AND CID7</scope>
    <scope>TISSUE SPECIFICITY</scope>
</reference>
<reference key="10">
    <citation type="journal article" date="2007" name="J. Virol.">
        <title>The poly(A) binding protein is internalized in virus-induced vesicles or redistributed to the nucleolus during turnip mosaic virus infection.</title>
        <authorList>
            <person name="Beauchemin C."/>
            <person name="Laliberte J.F."/>
        </authorList>
    </citation>
    <scope>SUBCELLULAR LOCATION</scope>
</reference>
<reference key="11">
    <citation type="journal article" date="2008" name="J. Gen. Virol.">
        <title>Arabidopsis thaliana class II poly(A)-binding proteins are required for efficient multiplication of turnip mosaic virus.</title>
        <authorList>
            <person name="Dufresne P.J."/>
            <person name="Ubalijoro E."/>
            <person name="Fortin M.G."/>
            <person name="Laliberte J.F."/>
        </authorList>
    </citation>
    <scope>FUNCTION</scope>
    <scope>INDUCTION</scope>
    <scope>INTERACTION WITH VIRAL VPG-PRO AND RDRP</scope>
    <scope>DISRUPTION PHENOTYPE</scope>
</reference>
<reference key="12">
    <citation type="journal article" date="2008" name="Virology">
        <title>Heat shock 70 protein interaction with Turnip mosaic virus RNA-dependent RNA polymerase within virus-induced membrane vesicles.</title>
        <authorList>
            <person name="Dufresne P.J."/>
            <person name="Thivierge K."/>
            <person name="Cotton S."/>
            <person name="Beauchemin C."/>
            <person name="Ide C."/>
            <person name="Ubalijoro E."/>
            <person name="Laliberte J.F."/>
            <person name="Fortin M.G."/>
        </authorList>
    </citation>
    <scope>INTERACTION WITH VIRAL RDRP</scope>
    <scope>FUNCTION</scope>
</reference>
<reference key="13">
    <citation type="journal article" date="2012" name="Plant Sci.">
        <title>ERD15--an attenuator of plant ABA responses and stomatal aperture.</title>
        <authorList>
            <person name="Aalto M.K."/>
            <person name="Helenius E."/>
            <person name="Kariola T."/>
            <person name="Pennanen V."/>
            <person name="Heino P."/>
            <person name="Horak H."/>
            <person name="Puzorjova I."/>
            <person name="Kollist H."/>
            <person name="Palva E.T."/>
        </authorList>
    </citation>
    <scope>INTERACTION WITH ERD15/CID1</scope>
</reference>
<reference key="14">
    <citation type="journal article" date="2016" name="Cell Rep.">
        <title>Uridylation and PABP cooperate to repair mRNA deadenylated ends in Arabidopsis.</title>
        <authorList>
            <person name="Zuber H."/>
            <person name="Scheer H."/>
            <person name="Ferrier E."/>
            <person name="Sement F.M."/>
            <person name="Mercier P."/>
            <person name="Stupfler B."/>
            <person name="Gagliardi D."/>
        </authorList>
    </citation>
    <scope>FUNCTION</scope>
</reference>
<name>PABP2_ARATH</name>
<keyword id="KW-0963">Cytoplasm</keyword>
<keyword id="KW-0945">Host-virus interaction</keyword>
<keyword id="KW-0866">Nonsense-mediated mRNA decay</keyword>
<keyword id="KW-0539">Nucleus</keyword>
<keyword id="KW-1185">Reference proteome</keyword>
<keyword id="KW-0677">Repeat</keyword>
<keyword id="KW-0694">RNA-binding</keyword>
<keyword id="KW-0810">Translation regulation</keyword>
<organism>
    <name type="scientific">Arabidopsis thaliana</name>
    <name type="common">Mouse-ear cress</name>
    <dbReference type="NCBI Taxonomy" id="3702"/>
    <lineage>
        <taxon>Eukaryota</taxon>
        <taxon>Viridiplantae</taxon>
        <taxon>Streptophyta</taxon>
        <taxon>Embryophyta</taxon>
        <taxon>Tracheophyta</taxon>
        <taxon>Spermatophyta</taxon>
        <taxon>Magnoliopsida</taxon>
        <taxon>eudicotyledons</taxon>
        <taxon>Gunneridae</taxon>
        <taxon>Pentapetalae</taxon>
        <taxon>rosids</taxon>
        <taxon>malvids</taxon>
        <taxon>Brassicales</taxon>
        <taxon>Brassicaceae</taxon>
        <taxon>Camelineae</taxon>
        <taxon>Arabidopsis</taxon>
    </lineage>
</organism>
<proteinExistence type="evidence at protein level"/>
<comment type="function">
    <text evidence="4 9 10 12">Binds the poly(A) tail of mRNA. Appears to be an important mediator of the multiple roles of the poly(A) tail in mRNA biogenesis, stability and translation. In the cytoplasm, affects both translation and mRNA decay. Stimulates translation by interaction with translation initiation factor eIF4G, a subunit of the cap-binding complex eIF4F, bringing the 5'- and 3'-ends of the mRNA in proximity. The formation of this circular mRNP structure appears to be critical for the synergistic effects of the cap and the poly(A) tail in facilitating translation initiation, recycling of ribosomes, and mRNA stability. During infection with potyvirus TuMV, acts as a potential integral component of the viral replicase complex that could play an important role in the regulation of potyviral RNA-dependent RNA polymerase (RdRp). Binds to uridylated mRNAs and determines the size of uridine extensions (PubMed:26972004). Limits uridine extension by URT1, likely by binding to the oligo(A) tail and preventing URT1 access (PubMed:26972004).</text>
</comment>
<comment type="subunit">
    <text evidence="4 6 7 9 10 11">Interacts with eIF-iso4G. Interacts with ERD15/CID1 and CID7. Interacts with Turnip mosaic virus (TuMV) VPg-Pro and RNA-dependent RNA polymerase (RdRp).</text>
</comment>
<comment type="subcellular location">
    <subcellularLocation>
        <location evidence="8">Cytoplasm</location>
    </subcellularLocation>
    <subcellularLocation>
        <location evidence="8">Nucleus</location>
    </subcellularLocation>
    <text>In TuMV-infected plants, partially retargeted in cytoplasmic virus-induced vesicles and in the nucleolus.</text>
</comment>
<comment type="tissue specificity">
    <text evidence="5 7 13">Expressed in all organs (at the protein level) but under distinct spatial and temporal regulation within each organ.</text>
</comment>
<comment type="induction">
    <text evidence="10">By potyvirus TuMV infection.</text>
</comment>
<comment type="disruption phenotype">
    <text evidence="10">Pab2 and pab4 double mutants, as well as pab2 and pab8 double mutants show significant growth and development defects and more resistance to Turnip mosaic virus (TuMV).</text>
</comment>
<comment type="miscellaneous">
    <text>A.thaliana contains 8 PABP genes.</text>
</comment>
<comment type="similarity">
    <text evidence="14">Belongs to the polyadenylate-binding protein type-1 family.</text>
</comment>